<gene>
    <name evidence="6" type="ORF">Ahy_B10g105758</name>
</gene>
<sequence>MAEALYYGGRQRQEQPRSTQLVKATTAVVAGGSLLILAGLVLAGTVIGLTTITPLFVIFSPVLVPAVITVALLGLGFLASGGFGVAAITVLTWIYRYVTGKHPPGANQLDTARHKLMGKAREIKDFGQQQTSGAQAS</sequence>
<name>OL111_ARAHY</name>
<reference evidence="5" key="1">
    <citation type="submission" date="2005-06" db="EMBL/GenBank/DDBJ databases">
        <title>Isolation of genes encoding peanut seed protein.</title>
        <authorList>
            <person name="Yan Y.S."/>
            <person name="Wang L."/>
            <person name="Huang S.Z."/>
        </authorList>
    </citation>
    <scope>NUCLEOTIDE SEQUENCE [MRNA]</scope>
    <source>
        <tissue evidence="5">Seed</tissue>
    </source>
</reference>
<reference evidence="6 7" key="2">
    <citation type="submission" date="2019-01" db="EMBL/GenBank/DDBJ databases">
        <title>Sequencing of cultivated peanut Arachis hypogaea provides insights into genome evolution and oil improvement.</title>
        <authorList>
            <person name="Chen X."/>
        </authorList>
    </citation>
    <scope>NUCLEOTIDE SEQUENCE [LARGE SCALE GENOMIC DNA]</scope>
    <source>
        <strain evidence="7">cv. Fuhuasheng</strain>
        <tissue evidence="6">Leaf</tissue>
    </source>
</reference>
<reference key="3">
    <citation type="journal article" date="2015" name="PLoS ONE">
        <title>Development of a novel strategy to isolate lipophilic allergens (oleosins) from peanuts.</title>
        <authorList>
            <person name="Schwager C."/>
            <person name="Kull S."/>
            <person name="Krause S."/>
            <person name="Schocker F."/>
            <person name="Petersen A."/>
            <person name="Becker W.M."/>
            <person name="Jappe U."/>
        </authorList>
    </citation>
    <scope>PROTEIN SEQUENCE OF 2-10; 102-113 AND 122-137</scope>
    <scope>SUBCELLULAR LOCATION</scope>
    <scope>TISSUE SPECIFICITY</scope>
    <scope>IDENTIFICATION BY MASS SPECTROMETRY</scope>
    <scope>ACETYLATION AT ALA-2</scope>
    <scope>ALLERGEN</scope>
    <source>
        <tissue evidence="3">Seed</tissue>
    </source>
</reference>
<proteinExistence type="evidence at protein level"/>
<evidence type="ECO:0000255" key="1"/>
<evidence type="ECO:0000269" key="2">
    <source>
    </source>
</evidence>
<evidence type="ECO:0000303" key="3">
    <source>
    </source>
</evidence>
<evidence type="ECO:0000305" key="4"/>
<evidence type="ECO:0000312" key="5">
    <source>
        <dbReference type="EMBL" id="AAZ20276.1"/>
    </source>
</evidence>
<evidence type="ECO:0000312" key="6">
    <source>
        <dbReference type="EMBL" id="RYQ86093.1"/>
    </source>
</evidence>
<evidence type="ECO:0000312" key="7">
    <source>
        <dbReference type="Proteomes" id="UP000289738"/>
    </source>
</evidence>
<organism evidence="5">
    <name type="scientific">Arachis hypogaea</name>
    <name type="common">Peanut</name>
    <dbReference type="NCBI Taxonomy" id="3818"/>
    <lineage>
        <taxon>Eukaryota</taxon>
        <taxon>Viridiplantae</taxon>
        <taxon>Streptophyta</taxon>
        <taxon>Embryophyta</taxon>
        <taxon>Tracheophyta</taxon>
        <taxon>Spermatophyta</taxon>
        <taxon>Magnoliopsida</taxon>
        <taxon>eudicotyledons</taxon>
        <taxon>Gunneridae</taxon>
        <taxon>Pentapetalae</taxon>
        <taxon>rosids</taxon>
        <taxon>fabids</taxon>
        <taxon>Fabales</taxon>
        <taxon>Fabaceae</taxon>
        <taxon>Papilionoideae</taxon>
        <taxon>50 kb inversion clade</taxon>
        <taxon>dalbergioids sensu lato</taxon>
        <taxon>Dalbergieae</taxon>
        <taxon>Pterocarpus clade</taxon>
        <taxon>Arachis</taxon>
    </lineage>
</organism>
<dbReference type="EMBL" id="DQ097716">
    <property type="protein sequence ID" value="AAZ20276.1"/>
    <property type="molecule type" value="mRNA"/>
</dbReference>
<dbReference type="EMBL" id="SDMP01000020">
    <property type="protein sequence ID" value="RYQ86093.1"/>
    <property type="molecule type" value="Genomic_DNA"/>
</dbReference>
<dbReference type="SMR" id="Q45W87"/>
<dbReference type="STRING" id="3818.Q45W87"/>
<dbReference type="Allergome" id="5760">
    <property type="allergen name" value="Ara h 11"/>
</dbReference>
<dbReference type="Allergome" id="5761">
    <property type="allergen name" value="Ara h 11.0101"/>
</dbReference>
<dbReference type="iPTMnet" id="Q45W87"/>
<dbReference type="OrthoDB" id="690239at2759"/>
<dbReference type="Proteomes" id="UP000289738">
    <property type="component" value="Chromosome B10"/>
</dbReference>
<dbReference type="GO" id="GO:0005576">
    <property type="term" value="C:extracellular region"/>
    <property type="evidence" value="ECO:0007669"/>
    <property type="project" value="TreeGrafter"/>
</dbReference>
<dbReference type="GO" id="GO:0016020">
    <property type="term" value="C:membrane"/>
    <property type="evidence" value="ECO:0007669"/>
    <property type="project" value="UniProtKB-SubCell"/>
</dbReference>
<dbReference type="GO" id="GO:0012511">
    <property type="term" value="C:monolayer-surrounded lipid storage body"/>
    <property type="evidence" value="ECO:0007669"/>
    <property type="project" value="InterPro"/>
</dbReference>
<dbReference type="GO" id="GO:0019915">
    <property type="term" value="P:lipid storage"/>
    <property type="evidence" value="ECO:0007669"/>
    <property type="project" value="TreeGrafter"/>
</dbReference>
<dbReference type="GO" id="GO:0009791">
    <property type="term" value="P:post-embryonic development"/>
    <property type="evidence" value="ECO:0007669"/>
    <property type="project" value="UniProtKB-ARBA"/>
</dbReference>
<dbReference type="GO" id="GO:0048608">
    <property type="term" value="P:reproductive structure development"/>
    <property type="evidence" value="ECO:0007669"/>
    <property type="project" value="UniProtKB-ARBA"/>
</dbReference>
<dbReference type="GO" id="GO:0019953">
    <property type="term" value="P:sexual reproduction"/>
    <property type="evidence" value="ECO:0007669"/>
    <property type="project" value="TreeGrafter"/>
</dbReference>
<dbReference type="InterPro" id="IPR000136">
    <property type="entry name" value="Oleosin"/>
</dbReference>
<dbReference type="PANTHER" id="PTHR33203">
    <property type="entry name" value="OLEOSIN"/>
    <property type="match status" value="1"/>
</dbReference>
<dbReference type="PANTHER" id="PTHR33203:SF25">
    <property type="entry name" value="OLEOSIN 18.5 KDA"/>
    <property type="match status" value="1"/>
</dbReference>
<dbReference type="Pfam" id="PF01277">
    <property type="entry name" value="Oleosin"/>
    <property type="match status" value="1"/>
</dbReference>
<comment type="function">
    <text evidence="4">May have a structural role to stabilize the lipid body during desiccation of the seed by preventing coalescence of the oil. Probably interacts with both lipid and phospholipid moieties of lipid bodies. May also provide recognition signals for specific lipase anchorage in lipolysis during seedling growth.</text>
</comment>
<comment type="subcellular location">
    <subcellularLocation>
        <location evidence="2">Lipid droplet</location>
    </subcellularLocation>
    <subcellularLocation>
        <location evidence="1">Membrane</location>
        <topology evidence="1">Multi-pass membrane protein</topology>
    </subcellularLocation>
    <text evidence="4">Surface of oil bodies. Oleosins exist at a monolayer lipid/water interface.</text>
</comment>
<comment type="tissue specificity">
    <text evidence="2">Expressed in seeds (at protein level).</text>
</comment>
<comment type="allergen">
    <text evidence="2">Causes an allergic reaction in human. Pooled with Ara h 10 binds to IgE in 75% of the 4 peanut-allergic patients tested.</text>
</comment>
<comment type="similarity">
    <text evidence="4">Belongs to the oleosin family.</text>
</comment>
<accession>Q45W87</accession>
<protein>
    <recommendedName>
        <fullName evidence="4">Oleosin Ara h 11.0101</fullName>
    </recommendedName>
    <allergenName evidence="3">Ara h 11.0101</allergenName>
</protein>
<feature type="initiator methionine" description="Removed" evidence="2">
    <location>
        <position position="1"/>
    </location>
</feature>
<feature type="chain" id="PRO_0000449841" description="Oleosin Ara h 11.0101">
    <location>
        <begin position="2"/>
        <end position="137"/>
    </location>
</feature>
<feature type="transmembrane region" description="Helical" evidence="1">
    <location>
        <begin position="27"/>
        <end position="47"/>
    </location>
</feature>
<feature type="transmembrane region" description="Helical" evidence="1">
    <location>
        <begin position="55"/>
        <end position="75"/>
    </location>
</feature>
<feature type="modified residue" description="N-acetylalanine; alternate" evidence="2">
    <location>
        <position position="2"/>
    </location>
</feature>
<keyword id="KW-0007">Acetylation</keyword>
<keyword id="KW-0020">Allergen</keyword>
<keyword id="KW-0903">Direct protein sequencing</keyword>
<keyword id="KW-0551">Lipid droplet</keyword>
<keyword id="KW-0472">Membrane</keyword>
<keyword id="KW-1185">Reference proteome</keyword>
<keyword id="KW-0812">Transmembrane</keyword>
<keyword id="KW-1133">Transmembrane helix</keyword>